<name>ARI12_ARATH</name>
<sequence>MDNNSVIGSEVDAEADESYVNAALEDGQTGKKSVQRNYATVLTEEDIRALMEIDVQSVSDFTSLSKAEATLLLSHLRWNVDCICKQWSAGAQSVRDSVGLLELDPPSDDNEYFCGACGESHPHKNLASVSCGHRICTRCWTSHINKIISEKPAAEWNLWLKCPVRVGLHASCPASVGLDTIERFASKREKFNYNQYLLRSYVDNRETMKWHPIQGSRCAIDLSPGSGNASVSCHRLVRFCWNCREDAHSPVDCKTAAKWLLENAVPCPKCKLRIPRNQDNSLKMKCLPCNYVFCWFCHVDWIEDMEGTGGDLHFCTFDAVLSDQRGKMSESDSNRYEDCYENWDSNELLMQKEQANLPKLDTIIQELSNTQLENVSQLKFILEAGLQIIECRRVLEWTYVYGYYLREDEVGKQNLLKDTQERLKKFVENLKHCLETNLQPFRYEEEPSKDFNAFRIKLTELTSLTRNHYENVVKDVENGLASVVSEGEASGSGRNQ</sequence>
<proteinExistence type="evidence at transcript level"/>
<gene>
    <name type="primary">ARI12</name>
    <name type="ordered locus">At1g05880</name>
    <name type="ORF">T20M3.15</name>
</gene>
<protein>
    <recommendedName>
        <fullName>Probable E3 ubiquitin-protein ligase ARI12</fullName>
        <ecNumber evidence="2">2.3.2.31</ecNumber>
    </recommendedName>
    <alternativeName>
        <fullName>ARIADNE-like protein ARI12</fullName>
    </alternativeName>
    <alternativeName>
        <fullName>Protein ariadne homolog 12</fullName>
    </alternativeName>
    <alternativeName>
        <fullName evidence="7">RING-type E3 ubiquitin transferase ARI12</fullName>
    </alternativeName>
</protein>
<evidence type="ECO:0000250" key="1"/>
<evidence type="ECO:0000250" key="2">
    <source>
        <dbReference type="UniProtKB" id="Q9Y4X5"/>
    </source>
</evidence>
<evidence type="ECO:0000255" key="3">
    <source>
        <dbReference type="PROSITE-ProRule" id="PRU01221"/>
    </source>
</evidence>
<evidence type="ECO:0000269" key="4">
    <source>
    </source>
</evidence>
<evidence type="ECO:0000269" key="5">
    <source>
    </source>
</evidence>
<evidence type="ECO:0000303" key="6">
    <source>
    </source>
</evidence>
<evidence type="ECO:0000305" key="7"/>
<dbReference type="EC" id="2.3.2.31" evidence="2"/>
<dbReference type="EMBL" id="AJ510215">
    <property type="protein sequence ID" value="CAD52894.1"/>
    <property type="molecule type" value="Genomic_DNA"/>
</dbReference>
<dbReference type="EMBL" id="AC009999">
    <property type="protein sequence ID" value="AAF29395.1"/>
    <property type="status" value="ALT_SEQ"/>
    <property type="molecule type" value="Genomic_DNA"/>
</dbReference>
<dbReference type="EMBL" id="CP002684">
    <property type="protein sequence ID" value="AEE27910.1"/>
    <property type="molecule type" value="Genomic_DNA"/>
</dbReference>
<dbReference type="EMBL" id="CP002684">
    <property type="protein sequence ID" value="AEE27911.1"/>
    <property type="molecule type" value="Genomic_DNA"/>
</dbReference>
<dbReference type="EMBL" id="AK221317">
    <property type="protein sequence ID" value="BAD94096.1"/>
    <property type="molecule type" value="mRNA"/>
</dbReference>
<dbReference type="EMBL" id="AK230389">
    <property type="protein sequence ID" value="BAF02187.1"/>
    <property type="molecule type" value="mRNA"/>
</dbReference>
<dbReference type="EMBL" id="BX816332">
    <property type="status" value="NOT_ANNOTATED_CDS"/>
    <property type="molecule type" value="mRNA"/>
</dbReference>
<dbReference type="PIR" id="F86193">
    <property type="entry name" value="F86193"/>
</dbReference>
<dbReference type="RefSeq" id="NP_001184919.1">
    <molecule id="Q84RQ9-1"/>
    <property type="nucleotide sequence ID" value="NM_001197990.1"/>
</dbReference>
<dbReference type="RefSeq" id="NP_172079.2">
    <molecule id="Q84RQ9-2"/>
    <property type="nucleotide sequence ID" value="NM_100469.2"/>
</dbReference>
<dbReference type="SMR" id="Q84RQ9"/>
<dbReference type="BioGRID" id="22340">
    <property type="interactions" value="1"/>
</dbReference>
<dbReference type="FunCoup" id="Q84RQ9">
    <property type="interactions" value="92"/>
</dbReference>
<dbReference type="STRING" id="3702.Q84RQ9"/>
<dbReference type="iPTMnet" id="Q84RQ9"/>
<dbReference type="PaxDb" id="3702-AT1G05880.2"/>
<dbReference type="EnsemblPlants" id="AT1G05880.1">
    <molecule id="Q84RQ9-2"/>
    <property type="protein sequence ID" value="AT1G05880.1"/>
    <property type="gene ID" value="AT1G05880"/>
</dbReference>
<dbReference type="EnsemblPlants" id="AT1G05880.2">
    <molecule id="Q84RQ9-1"/>
    <property type="protein sequence ID" value="AT1G05880.2"/>
    <property type="gene ID" value="AT1G05880"/>
</dbReference>
<dbReference type="GeneID" id="837098"/>
<dbReference type="Gramene" id="AT1G05880.1">
    <molecule id="Q84RQ9-2"/>
    <property type="protein sequence ID" value="AT1G05880.1"/>
    <property type="gene ID" value="AT1G05880"/>
</dbReference>
<dbReference type="Gramene" id="AT1G05880.2">
    <molecule id="Q84RQ9-1"/>
    <property type="protein sequence ID" value="AT1G05880.2"/>
    <property type="gene ID" value="AT1G05880"/>
</dbReference>
<dbReference type="KEGG" id="ath:AT1G05880"/>
<dbReference type="Araport" id="AT1G05880"/>
<dbReference type="TAIR" id="AT1G05880">
    <property type="gene designation" value="ARI12"/>
</dbReference>
<dbReference type="eggNOG" id="KOG1815">
    <property type="taxonomic scope" value="Eukaryota"/>
</dbReference>
<dbReference type="HOGENOM" id="CLU_009823_3_1_1"/>
<dbReference type="InParanoid" id="Q84RQ9"/>
<dbReference type="OMA" id="THDEYEE"/>
<dbReference type="PhylomeDB" id="Q84RQ9"/>
<dbReference type="UniPathway" id="UPA00143"/>
<dbReference type="PRO" id="PR:Q84RQ9"/>
<dbReference type="Proteomes" id="UP000006548">
    <property type="component" value="Chromosome 1"/>
</dbReference>
<dbReference type="ExpressionAtlas" id="Q84RQ9">
    <property type="expression patterns" value="baseline and differential"/>
</dbReference>
<dbReference type="GO" id="GO:0004842">
    <property type="term" value="F:ubiquitin-protein transferase activity"/>
    <property type="evidence" value="ECO:0007669"/>
    <property type="project" value="InterPro"/>
</dbReference>
<dbReference type="GO" id="GO:0008270">
    <property type="term" value="F:zinc ion binding"/>
    <property type="evidence" value="ECO:0007669"/>
    <property type="project" value="UniProtKB-KW"/>
</dbReference>
<dbReference type="GO" id="GO:0071456">
    <property type="term" value="P:cellular response to hypoxia"/>
    <property type="evidence" value="ECO:0000270"/>
    <property type="project" value="TAIR"/>
</dbReference>
<dbReference type="GO" id="GO:0016567">
    <property type="term" value="P:protein ubiquitination"/>
    <property type="evidence" value="ECO:0007669"/>
    <property type="project" value="UniProtKB-UniPathway"/>
</dbReference>
<dbReference type="GO" id="GO:0010224">
    <property type="term" value="P:response to UV-B"/>
    <property type="evidence" value="ECO:0000270"/>
    <property type="project" value="TAIR"/>
</dbReference>
<dbReference type="CDD" id="cd20346">
    <property type="entry name" value="BRcat_RBR_ANKIB1"/>
    <property type="match status" value="1"/>
</dbReference>
<dbReference type="FunFam" id="1.20.120.1750:FF:000095">
    <property type="entry name" value="Probable E3 ubiquitin-protein ligase ARI12"/>
    <property type="match status" value="1"/>
</dbReference>
<dbReference type="Gene3D" id="1.20.120.1750">
    <property type="match status" value="1"/>
</dbReference>
<dbReference type="Gene3D" id="3.30.40.10">
    <property type="entry name" value="Zinc/RING finger domain, C3HC4 (zinc finger)"/>
    <property type="match status" value="1"/>
</dbReference>
<dbReference type="InterPro" id="IPR031127">
    <property type="entry name" value="E3_UB_ligase_RBR"/>
</dbReference>
<dbReference type="InterPro" id="IPR002867">
    <property type="entry name" value="IBR_dom"/>
</dbReference>
<dbReference type="InterPro" id="IPR044066">
    <property type="entry name" value="TRIAD_supradom"/>
</dbReference>
<dbReference type="InterPro" id="IPR013083">
    <property type="entry name" value="Znf_RING/FYVE/PHD"/>
</dbReference>
<dbReference type="PANTHER" id="PTHR11685">
    <property type="entry name" value="RBR FAMILY RING FINGER AND IBR DOMAIN-CONTAINING"/>
    <property type="match status" value="1"/>
</dbReference>
<dbReference type="Pfam" id="PF01485">
    <property type="entry name" value="IBR"/>
    <property type="match status" value="1"/>
</dbReference>
<dbReference type="Pfam" id="PF22191">
    <property type="entry name" value="IBR_1"/>
    <property type="match status" value="1"/>
</dbReference>
<dbReference type="SUPFAM" id="SSF57850">
    <property type="entry name" value="RING/U-box"/>
    <property type="match status" value="2"/>
</dbReference>
<dbReference type="PROSITE" id="PS51873">
    <property type="entry name" value="TRIAD"/>
    <property type="match status" value="1"/>
</dbReference>
<feature type="chain" id="PRO_0000356205" description="Probable E3 ubiquitin-protein ligase ARI12">
    <location>
        <begin position="1"/>
        <end position="496"/>
    </location>
</feature>
<feature type="zinc finger region" description="RING-type 1" evidence="3">
    <location>
        <begin position="114"/>
        <end position="172"/>
    </location>
</feature>
<feature type="zinc finger region" description="IBR-type" evidence="3">
    <location>
        <begin position="191"/>
        <end position="253"/>
    </location>
</feature>
<feature type="zinc finger region" description="RING-type 2; atypical" evidence="3">
    <location>
        <begin position="267"/>
        <end position="297"/>
    </location>
</feature>
<feature type="region of interest" description="TRIAD supradomain" evidence="3">
    <location>
        <begin position="110"/>
        <end position="319"/>
    </location>
</feature>
<feature type="binding site" evidence="3">
    <location>
        <position position="114"/>
    </location>
    <ligand>
        <name>Zn(2+)</name>
        <dbReference type="ChEBI" id="CHEBI:29105"/>
        <label>1</label>
    </ligand>
</feature>
<feature type="binding site" evidence="3">
    <location>
        <position position="117"/>
    </location>
    <ligand>
        <name>Zn(2+)</name>
        <dbReference type="ChEBI" id="CHEBI:29105"/>
        <label>1</label>
    </ligand>
</feature>
<feature type="binding site" evidence="3">
    <location>
        <position position="131"/>
    </location>
    <ligand>
        <name>Zn(2+)</name>
        <dbReference type="ChEBI" id="CHEBI:29105"/>
        <label>2</label>
    </ligand>
</feature>
<feature type="binding site" evidence="3">
    <location>
        <position position="133"/>
    </location>
    <ligand>
        <name>Zn(2+)</name>
        <dbReference type="ChEBI" id="CHEBI:29105"/>
        <label>2</label>
    </ligand>
</feature>
<feature type="binding site" evidence="3">
    <location>
        <position position="136"/>
    </location>
    <ligand>
        <name>Zn(2+)</name>
        <dbReference type="ChEBI" id="CHEBI:29105"/>
        <label>1</label>
    </ligand>
</feature>
<feature type="binding site" evidence="3">
    <location>
        <position position="139"/>
    </location>
    <ligand>
        <name>Zn(2+)</name>
        <dbReference type="ChEBI" id="CHEBI:29105"/>
        <label>1</label>
    </ligand>
</feature>
<feature type="binding site" evidence="3">
    <location>
        <position position="162"/>
    </location>
    <ligand>
        <name>Zn(2+)</name>
        <dbReference type="ChEBI" id="CHEBI:29105"/>
        <label>2</label>
    </ligand>
</feature>
<feature type="binding site" evidence="3">
    <location>
        <position position="172"/>
    </location>
    <ligand>
        <name>Zn(2+)</name>
        <dbReference type="ChEBI" id="CHEBI:29105"/>
        <label>2</label>
    </ligand>
</feature>
<feature type="binding site" evidence="3">
    <location>
        <position position="240"/>
    </location>
    <ligand>
        <name>Zn(2+)</name>
        <dbReference type="ChEBI" id="CHEBI:29105"/>
        <label>3</label>
    </ligand>
</feature>
<feature type="binding site" evidence="3">
    <location>
        <position position="243"/>
    </location>
    <ligand>
        <name>Zn(2+)</name>
        <dbReference type="ChEBI" id="CHEBI:29105"/>
        <label>3</label>
    </ligand>
</feature>
<feature type="binding site" evidence="3">
    <location>
        <position position="248"/>
    </location>
    <ligand>
        <name>Zn(2+)</name>
        <dbReference type="ChEBI" id="CHEBI:29105"/>
        <label>3</label>
    </ligand>
</feature>
<feature type="binding site" evidence="3">
    <location>
        <position position="253"/>
    </location>
    <ligand>
        <name>Zn(2+)</name>
        <dbReference type="ChEBI" id="CHEBI:29105"/>
        <label>3</label>
    </ligand>
</feature>
<feature type="binding site" evidence="3">
    <location>
        <position position="267"/>
    </location>
    <ligand>
        <name>Zn(2+)</name>
        <dbReference type="ChEBI" id="CHEBI:29105"/>
        <label>4</label>
    </ligand>
</feature>
<feature type="binding site" evidence="3">
    <location>
        <position position="270"/>
    </location>
    <ligand>
        <name>Zn(2+)</name>
        <dbReference type="ChEBI" id="CHEBI:29105"/>
        <label>4</label>
    </ligand>
</feature>
<feature type="binding site" evidence="3">
    <location>
        <position position="286"/>
    </location>
    <ligand>
        <name>Zn(2+)</name>
        <dbReference type="ChEBI" id="CHEBI:29105"/>
        <label>4</label>
    </ligand>
</feature>
<feature type="binding site" evidence="3">
    <location>
        <position position="289"/>
    </location>
    <ligand>
        <name>Zn(2+)</name>
        <dbReference type="ChEBI" id="CHEBI:29105"/>
        <label>4</label>
    </ligand>
</feature>
<feature type="splice variant" id="VSP_036005" description="In isoform 2." evidence="6">
    <location>
        <begin position="208"/>
        <end position="214"/>
    </location>
</feature>
<feature type="sequence conflict" description="In Ref. 1; CAD52894." evidence="7" ref="1">
    <original>Y</original>
    <variation>D</variation>
    <location>
        <position position="112"/>
    </location>
</feature>
<comment type="function">
    <text evidence="1 4">Might act as an E3 ubiquitin-protein ligase, or as part of E3 complex, which accepts ubiquitin from specific E2 ubiquitin-conjugating enzymes and then transfers it to substrates.</text>
</comment>
<comment type="catalytic activity">
    <reaction evidence="2">
        <text>[E2 ubiquitin-conjugating enzyme]-S-ubiquitinyl-L-cysteine + [acceptor protein]-L-lysine = [E2 ubiquitin-conjugating enzyme]-L-cysteine + [acceptor protein]-N(6)-ubiquitinyl-L-lysine.</text>
        <dbReference type="EC" id="2.3.2.31"/>
    </reaction>
</comment>
<comment type="cofactor">
    <cofactor evidence="7">
        <name>Zn(2+)</name>
        <dbReference type="ChEBI" id="CHEBI:29105"/>
    </cofactor>
    <text evidence="7">Binds 4 Zn(2+) ions per subunit.</text>
</comment>
<comment type="pathway">
    <text>Protein modification; protein ubiquitination.</text>
</comment>
<comment type="alternative products">
    <event type="alternative splicing"/>
    <isoform>
        <id>Q84RQ9-1</id>
        <name>1</name>
        <sequence type="displayed"/>
    </isoform>
    <isoform>
        <id>Q84RQ9-2</id>
        <name>2</name>
        <sequence type="described" ref="VSP_036005"/>
    </isoform>
</comment>
<comment type="tissue specificity">
    <text evidence="5">Preferentially expressed in roots.</text>
</comment>
<comment type="domain">
    <text evidence="2">Members of the RBR family are atypical E3 ligases. They interact with the E2 conjugating enzyme UBE2L3 and function like HECT-type E3 enzymes: they bind E2s via the first RING-type zinc finger, but require an obligate trans-thiolation step during the ubiquitin transfer, requiring a conserved active site Cys residue in the second RING-type zinc finger. The active site probably forms a thioester intermediate with ubiquitin taken from the active-site cysteine of the E2 before ultimately transferring it to a Lys residue on the substrate.</text>
</comment>
<comment type="miscellaneous">
    <molecule>Isoform 2</molecule>
    <text evidence="7">May be due to a competing acceptor splice site.</text>
</comment>
<comment type="similarity">
    <text evidence="7">Belongs to the RBR family. Ariadne subfamily.</text>
</comment>
<comment type="caution">
    <text evidence="7">Lacks two Cys residues in the IBR-type zinc finger domain and two Cys residues in the RING-type zinc finger domain 2 that are conserved features of the family.</text>
</comment>
<comment type="sequence caution" evidence="7">
    <conflict type="erroneous gene model prediction">
        <sequence resource="EMBL-CDS" id="AAF29395"/>
    </conflict>
</comment>
<keyword id="KW-0025">Alternative splicing</keyword>
<keyword id="KW-0479">Metal-binding</keyword>
<keyword id="KW-1185">Reference proteome</keyword>
<keyword id="KW-0677">Repeat</keyword>
<keyword id="KW-0808">Transferase</keyword>
<keyword id="KW-0833">Ubl conjugation pathway</keyword>
<keyword id="KW-0862">Zinc</keyword>
<keyword id="KW-0863">Zinc-finger</keyword>
<organism>
    <name type="scientific">Arabidopsis thaliana</name>
    <name type="common">Mouse-ear cress</name>
    <dbReference type="NCBI Taxonomy" id="3702"/>
    <lineage>
        <taxon>Eukaryota</taxon>
        <taxon>Viridiplantae</taxon>
        <taxon>Streptophyta</taxon>
        <taxon>Embryophyta</taxon>
        <taxon>Tracheophyta</taxon>
        <taxon>Spermatophyta</taxon>
        <taxon>Magnoliopsida</taxon>
        <taxon>eudicotyledons</taxon>
        <taxon>Gunneridae</taxon>
        <taxon>Pentapetalae</taxon>
        <taxon>rosids</taxon>
        <taxon>malvids</taxon>
        <taxon>Brassicales</taxon>
        <taxon>Brassicaceae</taxon>
        <taxon>Camelineae</taxon>
        <taxon>Arabidopsis</taxon>
    </lineage>
</organism>
<reference key="1">
    <citation type="journal article" date="2003" name="Plant Physiol.">
        <title>Identification and characterization of the ARIADNE gene family in Arabidopsis. A group of putative E3 ligases.</title>
        <authorList>
            <person name="Mladek C."/>
            <person name="Guger K."/>
            <person name="Hauser M.-T."/>
        </authorList>
    </citation>
    <scope>NUCLEOTIDE SEQUENCE [GENOMIC DNA]</scope>
    <scope>TISSUE SPECIFICITY</scope>
    <scope>NOMENCLATURE</scope>
    <scope>GENE FAMILY</scope>
    <source>
        <strain>cv. Columbia</strain>
    </source>
</reference>
<reference key="2">
    <citation type="journal article" date="2000" name="Nature">
        <title>Sequence and analysis of chromosome 1 of the plant Arabidopsis thaliana.</title>
        <authorList>
            <person name="Theologis A."/>
            <person name="Ecker J.R."/>
            <person name="Palm C.J."/>
            <person name="Federspiel N.A."/>
            <person name="Kaul S."/>
            <person name="White O."/>
            <person name="Alonso J."/>
            <person name="Altafi H."/>
            <person name="Araujo R."/>
            <person name="Bowman C.L."/>
            <person name="Brooks S.Y."/>
            <person name="Buehler E."/>
            <person name="Chan A."/>
            <person name="Chao Q."/>
            <person name="Chen H."/>
            <person name="Cheuk R.F."/>
            <person name="Chin C.W."/>
            <person name="Chung M.K."/>
            <person name="Conn L."/>
            <person name="Conway A.B."/>
            <person name="Conway A.R."/>
            <person name="Creasy T.H."/>
            <person name="Dewar K."/>
            <person name="Dunn P."/>
            <person name="Etgu P."/>
            <person name="Feldblyum T.V."/>
            <person name="Feng J.-D."/>
            <person name="Fong B."/>
            <person name="Fujii C.Y."/>
            <person name="Gill J.E."/>
            <person name="Goldsmith A.D."/>
            <person name="Haas B."/>
            <person name="Hansen N.F."/>
            <person name="Hughes B."/>
            <person name="Huizar L."/>
            <person name="Hunter J.L."/>
            <person name="Jenkins J."/>
            <person name="Johnson-Hopson C."/>
            <person name="Khan S."/>
            <person name="Khaykin E."/>
            <person name="Kim C.J."/>
            <person name="Koo H.L."/>
            <person name="Kremenetskaia I."/>
            <person name="Kurtz D.B."/>
            <person name="Kwan A."/>
            <person name="Lam B."/>
            <person name="Langin-Hooper S."/>
            <person name="Lee A."/>
            <person name="Lee J.M."/>
            <person name="Lenz C.A."/>
            <person name="Li J.H."/>
            <person name="Li Y.-P."/>
            <person name="Lin X."/>
            <person name="Liu S.X."/>
            <person name="Liu Z.A."/>
            <person name="Luros J.S."/>
            <person name="Maiti R."/>
            <person name="Marziali A."/>
            <person name="Militscher J."/>
            <person name="Miranda M."/>
            <person name="Nguyen M."/>
            <person name="Nierman W.C."/>
            <person name="Osborne B.I."/>
            <person name="Pai G."/>
            <person name="Peterson J."/>
            <person name="Pham P.K."/>
            <person name="Rizzo M."/>
            <person name="Rooney T."/>
            <person name="Rowley D."/>
            <person name="Sakano H."/>
            <person name="Salzberg S.L."/>
            <person name="Schwartz J.R."/>
            <person name="Shinn P."/>
            <person name="Southwick A.M."/>
            <person name="Sun H."/>
            <person name="Tallon L.J."/>
            <person name="Tambunga G."/>
            <person name="Toriumi M.J."/>
            <person name="Town C.D."/>
            <person name="Utterback T."/>
            <person name="Van Aken S."/>
            <person name="Vaysberg M."/>
            <person name="Vysotskaia V.S."/>
            <person name="Walker M."/>
            <person name="Wu D."/>
            <person name="Yu G."/>
            <person name="Fraser C.M."/>
            <person name="Venter J.C."/>
            <person name="Davis R.W."/>
        </authorList>
    </citation>
    <scope>NUCLEOTIDE SEQUENCE [LARGE SCALE GENOMIC DNA]</scope>
    <source>
        <strain>cv. Columbia</strain>
    </source>
</reference>
<reference key="3">
    <citation type="journal article" date="2017" name="Plant J.">
        <title>Araport11: a complete reannotation of the Arabidopsis thaliana reference genome.</title>
        <authorList>
            <person name="Cheng C.Y."/>
            <person name="Krishnakumar V."/>
            <person name="Chan A.P."/>
            <person name="Thibaud-Nissen F."/>
            <person name="Schobel S."/>
            <person name="Town C.D."/>
        </authorList>
    </citation>
    <scope>GENOME REANNOTATION</scope>
    <source>
        <strain>cv. Columbia</strain>
    </source>
</reference>
<reference key="4">
    <citation type="submission" date="2006-07" db="EMBL/GenBank/DDBJ databases">
        <title>Large-scale analysis of RIKEN Arabidopsis full-length (RAFL) cDNAs.</title>
        <authorList>
            <person name="Totoki Y."/>
            <person name="Seki M."/>
            <person name="Ishida J."/>
            <person name="Nakajima M."/>
            <person name="Enju A."/>
            <person name="Kamiya A."/>
            <person name="Narusaka M."/>
            <person name="Shin-i T."/>
            <person name="Nakagawa M."/>
            <person name="Sakamoto N."/>
            <person name="Oishi K."/>
            <person name="Kohara Y."/>
            <person name="Kobayashi M."/>
            <person name="Toyoda A."/>
            <person name="Sakaki Y."/>
            <person name="Sakurai T."/>
            <person name="Iida K."/>
            <person name="Akiyama K."/>
            <person name="Satou M."/>
            <person name="Toyoda T."/>
            <person name="Konagaya A."/>
            <person name="Carninci P."/>
            <person name="Kawai J."/>
            <person name="Hayashizaki Y."/>
            <person name="Shinozaki K."/>
        </authorList>
    </citation>
    <scope>NUCLEOTIDE SEQUENCE [LARGE SCALE MRNA] OF 1-272 (ISOFORM 1)</scope>
    <source>
        <strain>cv. Columbia</strain>
    </source>
</reference>
<reference key="5">
    <citation type="journal article" date="2004" name="Genome Res.">
        <title>Whole genome sequence comparisons and 'full-length' cDNA sequences: a combined approach to evaluate and improve Arabidopsis genome annotation.</title>
        <authorList>
            <person name="Castelli V."/>
            <person name="Aury J.-M."/>
            <person name="Jaillon O."/>
            <person name="Wincker P."/>
            <person name="Clepet C."/>
            <person name="Menard M."/>
            <person name="Cruaud C."/>
            <person name="Quetier F."/>
            <person name="Scarpelli C."/>
            <person name="Schaechter V."/>
            <person name="Temple G."/>
            <person name="Caboche M."/>
            <person name="Weissenbach J."/>
            <person name="Salanoubat M."/>
        </authorList>
    </citation>
    <scope>NUCLEOTIDE SEQUENCE [LARGE SCALE MRNA] OF 5-496 (ISOFORM 2)</scope>
    <source>
        <strain>cv. Columbia</strain>
    </source>
</reference>
<reference key="6">
    <citation type="journal article" date="2002" name="Mol. Biol. Evol.">
        <title>Comparative genomics of the RBR family, including the Parkinson's disease-related gene parkin and the genes of the ariadne subfamily.</title>
        <authorList>
            <person name="Marin I."/>
            <person name="Ferrus A."/>
        </authorList>
    </citation>
    <scope>FUNCTION</scope>
</reference>
<accession>Q84RQ9</accession>
<accession>Q56YK5</accession>
<accession>Q9MA38</accession>